<geneLocation type="chloroplast"/>
<comment type="function">
    <text evidence="2">Component of the acetyl coenzyme A carboxylase (ACC) complex. Biotin carboxylase (BC) catalyzes the carboxylation of biotin on its carrier protein (BCCP) and then the CO(2) group is transferred by the transcarboxylase to acetyl-CoA to form malonyl-CoA.</text>
</comment>
<comment type="catalytic activity">
    <reaction evidence="2">
        <text>N(6)-carboxybiotinyl-L-lysyl-[protein] + acetyl-CoA = N(6)-biotinyl-L-lysyl-[protein] + malonyl-CoA</text>
        <dbReference type="Rhea" id="RHEA:54728"/>
        <dbReference type="Rhea" id="RHEA-COMP:10505"/>
        <dbReference type="Rhea" id="RHEA-COMP:10506"/>
        <dbReference type="ChEBI" id="CHEBI:57288"/>
        <dbReference type="ChEBI" id="CHEBI:57384"/>
        <dbReference type="ChEBI" id="CHEBI:83144"/>
        <dbReference type="ChEBI" id="CHEBI:83145"/>
        <dbReference type="EC" id="2.1.3.15"/>
    </reaction>
</comment>
<comment type="cofactor">
    <cofactor evidence="2">
        <name>Zn(2+)</name>
        <dbReference type="ChEBI" id="CHEBI:29105"/>
    </cofactor>
    <text evidence="2">Binds 1 zinc ion per subunit.</text>
</comment>
<comment type="pathway">
    <text evidence="2">Lipid metabolism; malonyl-CoA biosynthesis; malonyl-CoA from acetyl-CoA: step 1/1.</text>
</comment>
<comment type="subunit">
    <text evidence="1">Acetyl-CoA carboxylase is a heterohexamer composed of biotin carboxyl carrier protein, biotin carboxylase and 2 subunits each of ACCase subunit alpha and ACCase plastid-coded subunit beta (accD).</text>
</comment>
<comment type="subcellular location">
    <subcellularLocation>
        <location evidence="2">Plastid</location>
        <location evidence="2">Chloroplast stroma</location>
    </subcellularLocation>
</comment>
<comment type="similarity">
    <text evidence="2">Belongs to the AccD/PCCB family.</text>
</comment>
<protein>
    <recommendedName>
        <fullName evidence="2">Acetyl-coenzyme A carboxylase carboxyl transferase subunit beta, chloroplastic</fullName>
        <shortName evidence="2">ACCase subunit beta</shortName>
        <shortName evidence="2">Acetyl-CoA carboxylase carboxyltransferase subunit beta</shortName>
        <ecNumber evidence="2">2.1.3.15</ecNumber>
    </recommendedName>
</protein>
<proteinExistence type="inferred from homology"/>
<sequence>MEKLWLNSMFSNGKLEHKYRLSRSMDSLGPIRYSSGSEDPVLNAMDNKVSSWNDSGSCNFSNVEHFLDIIDIWSFISDDTFLVRDSNGDSFSIYFDIENQIFEIDNDSTFINELESSFSSYLDSSSMNSGSKKSSRYYYRYMYDTQSSWNNHINSCIDSYLRYEISIDSYISGETHNYSDNYVYNFICNESISGNESRNSAIRTSVNGSDFNIRGRSNDLDINKKYRHLWVQCENCYGLNYKQFFRSRLNICEHCGYHLKMSSSERIELLIDPGTWDPLDENMVSTDPIEFHSEEEPYRDRIDSYQKKTGLTEAVQTGIGELNGIPIAIGVMDFQFMGGSMGSVVGEKITRLIEYATNKSLPVIIVCASGGARMQEGSLSLMQMAKISSALYNYQLNKKLFYVAILTSPTTGGVTASFGMLGDIIIAEPNAYIAFAGKRVIEQTLNKTVPDGSQAAEYLFQKGLFDLIVPRNLLKGVLGELFQLHGFFPLT</sequence>
<accession>A9L9A5</accession>
<name>ACCD_LEMMI</name>
<reference key="1">
    <citation type="journal article" date="2008" name="J. Mol. Evol.">
        <title>Complete sequence of the Duckweed (Lemna minor) chloroplast genome: structural organization and phylogenetic relationships to other angiosperms.</title>
        <authorList>
            <person name="Mardanov A.V."/>
            <person name="Ravin N.V."/>
            <person name="Kuznetsov B.B."/>
            <person name="Samigullin T.H."/>
            <person name="Antonov A.S."/>
            <person name="Kolganova T.V."/>
            <person name="Skyabin K.G."/>
        </authorList>
    </citation>
    <scope>NUCLEOTIDE SEQUENCE [LARGE SCALE GENOMIC DNA]</scope>
</reference>
<organism>
    <name type="scientific">Lemna minor</name>
    <name type="common">Common duckweed</name>
    <dbReference type="NCBI Taxonomy" id="4472"/>
    <lineage>
        <taxon>Eukaryota</taxon>
        <taxon>Viridiplantae</taxon>
        <taxon>Streptophyta</taxon>
        <taxon>Embryophyta</taxon>
        <taxon>Tracheophyta</taxon>
        <taxon>Spermatophyta</taxon>
        <taxon>Magnoliopsida</taxon>
        <taxon>Liliopsida</taxon>
        <taxon>Araceae</taxon>
        <taxon>Lemnoideae</taxon>
        <taxon>Lemna</taxon>
    </lineage>
</organism>
<feature type="chain" id="PRO_0000359147" description="Acetyl-coenzyme A carboxylase carboxyl transferase subunit beta, chloroplastic">
    <location>
        <begin position="1"/>
        <end position="491"/>
    </location>
</feature>
<feature type="domain" description="CoA carboxyltransferase N-terminal" evidence="3">
    <location>
        <begin position="229"/>
        <end position="491"/>
    </location>
</feature>
<feature type="zinc finger region" description="C4-type" evidence="2">
    <location>
        <begin position="233"/>
        <end position="255"/>
    </location>
</feature>
<feature type="binding site" evidence="2">
    <location>
        <position position="233"/>
    </location>
    <ligand>
        <name>Zn(2+)</name>
        <dbReference type="ChEBI" id="CHEBI:29105"/>
    </ligand>
</feature>
<feature type="binding site" evidence="2">
    <location>
        <position position="236"/>
    </location>
    <ligand>
        <name>Zn(2+)</name>
        <dbReference type="ChEBI" id="CHEBI:29105"/>
    </ligand>
</feature>
<feature type="binding site" evidence="2">
    <location>
        <position position="252"/>
    </location>
    <ligand>
        <name>Zn(2+)</name>
        <dbReference type="ChEBI" id="CHEBI:29105"/>
    </ligand>
</feature>
<feature type="binding site" evidence="2">
    <location>
        <position position="255"/>
    </location>
    <ligand>
        <name>Zn(2+)</name>
        <dbReference type="ChEBI" id="CHEBI:29105"/>
    </ligand>
</feature>
<evidence type="ECO:0000250" key="1"/>
<evidence type="ECO:0000255" key="2">
    <source>
        <dbReference type="HAMAP-Rule" id="MF_01395"/>
    </source>
</evidence>
<evidence type="ECO:0000255" key="3">
    <source>
        <dbReference type="PROSITE-ProRule" id="PRU01136"/>
    </source>
</evidence>
<dbReference type="EC" id="2.1.3.15" evidence="2"/>
<dbReference type="EMBL" id="DQ400350">
    <property type="protein sequence ID" value="ABD48504.1"/>
    <property type="molecule type" value="Genomic_DNA"/>
</dbReference>
<dbReference type="RefSeq" id="YP_001595517.1">
    <property type="nucleotide sequence ID" value="NC_010109.1"/>
</dbReference>
<dbReference type="SMR" id="A9L9A5"/>
<dbReference type="GeneID" id="5787590"/>
<dbReference type="UniPathway" id="UPA00655">
    <property type="reaction ID" value="UER00711"/>
</dbReference>
<dbReference type="GO" id="GO:0009317">
    <property type="term" value="C:acetyl-CoA carboxylase complex"/>
    <property type="evidence" value="ECO:0007669"/>
    <property type="project" value="InterPro"/>
</dbReference>
<dbReference type="GO" id="GO:0009570">
    <property type="term" value="C:chloroplast stroma"/>
    <property type="evidence" value="ECO:0007669"/>
    <property type="project" value="UniProtKB-SubCell"/>
</dbReference>
<dbReference type="GO" id="GO:0003989">
    <property type="term" value="F:acetyl-CoA carboxylase activity"/>
    <property type="evidence" value="ECO:0007669"/>
    <property type="project" value="InterPro"/>
</dbReference>
<dbReference type="GO" id="GO:0005524">
    <property type="term" value="F:ATP binding"/>
    <property type="evidence" value="ECO:0007669"/>
    <property type="project" value="UniProtKB-KW"/>
</dbReference>
<dbReference type="GO" id="GO:0016743">
    <property type="term" value="F:carboxyl- or carbamoyltransferase activity"/>
    <property type="evidence" value="ECO:0007669"/>
    <property type="project" value="UniProtKB-UniRule"/>
</dbReference>
<dbReference type="GO" id="GO:0008270">
    <property type="term" value="F:zinc ion binding"/>
    <property type="evidence" value="ECO:0007669"/>
    <property type="project" value="UniProtKB-UniRule"/>
</dbReference>
<dbReference type="GO" id="GO:0006633">
    <property type="term" value="P:fatty acid biosynthetic process"/>
    <property type="evidence" value="ECO:0007669"/>
    <property type="project" value="UniProtKB-KW"/>
</dbReference>
<dbReference type="GO" id="GO:2001295">
    <property type="term" value="P:malonyl-CoA biosynthetic process"/>
    <property type="evidence" value="ECO:0007669"/>
    <property type="project" value="UniProtKB-UniRule"/>
</dbReference>
<dbReference type="Gene3D" id="3.90.226.10">
    <property type="entry name" value="2-enoyl-CoA Hydratase, Chain A, domain 1"/>
    <property type="match status" value="1"/>
</dbReference>
<dbReference type="HAMAP" id="MF_01395">
    <property type="entry name" value="AcetylCoA_CT_beta"/>
    <property type="match status" value="1"/>
</dbReference>
<dbReference type="InterPro" id="IPR034733">
    <property type="entry name" value="AcCoA_carboxyl_beta"/>
</dbReference>
<dbReference type="InterPro" id="IPR000438">
    <property type="entry name" value="Acetyl_CoA_COase_Trfase_b_su"/>
</dbReference>
<dbReference type="InterPro" id="IPR029045">
    <property type="entry name" value="ClpP/crotonase-like_dom_sf"/>
</dbReference>
<dbReference type="InterPro" id="IPR011762">
    <property type="entry name" value="COA_CT_N"/>
</dbReference>
<dbReference type="NCBIfam" id="TIGR00515">
    <property type="entry name" value="accD"/>
    <property type="match status" value="1"/>
</dbReference>
<dbReference type="PANTHER" id="PTHR42995">
    <property type="entry name" value="ACETYL-COENZYME A CARBOXYLASE CARBOXYL TRANSFERASE SUBUNIT BETA, CHLOROPLASTIC"/>
    <property type="match status" value="1"/>
</dbReference>
<dbReference type="PANTHER" id="PTHR42995:SF5">
    <property type="entry name" value="ACETYL-COENZYME A CARBOXYLASE CARBOXYL TRANSFERASE SUBUNIT BETA, CHLOROPLASTIC"/>
    <property type="match status" value="1"/>
</dbReference>
<dbReference type="Pfam" id="PF01039">
    <property type="entry name" value="Carboxyl_trans"/>
    <property type="match status" value="1"/>
</dbReference>
<dbReference type="PRINTS" id="PR01070">
    <property type="entry name" value="ACCCTRFRASEB"/>
</dbReference>
<dbReference type="SUPFAM" id="SSF52096">
    <property type="entry name" value="ClpP/crotonase"/>
    <property type="match status" value="1"/>
</dbReference>
<dbReference type="PROSITE" id="PS50980">
    <property type="entry name" value="COA_CT_NTER"/>
    <property type="match status" value="1"/>
</dbReference>
<keyword id="KW-0067">ATP-binding</keyword>
<keyword id="KW-0150">Chloroplast</keyword>
<keyword id="KW-0275">Fatty acid biosynthesis</keyword>
<keyword id="KW-0276">Fatty acid metabolism</keyword>
<keyword id="KW-0444">Lipid biosynthesis</keyword>
<keyword id="KW-0443">Lipid metabolism</keyword>
<keyword id="KW-0479">Metal-binding</keyword>
<keyword id="KW-0547">Nucleotide-binding</keyword>
<keyword id="KW-0934">Plastid</keyword>
<keyword id="KW-0808">Transferase</keyword>
<keyword id="KW-0862">Zinc</keyword>
<keyword id="KW-0863">Zinc-finger</keyword>
<gene>
    <name evidence="2" type="primary">accD</name>
</gene>